<sequence>MPKRTFTKDDIRKFAEEENVRYLRLQFTDILGTIKNVEVPVSQLEKVLDNEMMFDGSSIEGFVRIEESDMYLHPDLDTWVIFPWTAGQGKVARLICDVYKTDGTPFEGDPRANLKRVLKEMEDLGFTDFNLGPEPEFFLFKLDEKGEPTLELNDDGGYFDLAPTDLGENCRRDIVLELEDMGFDIEASHHEVAPGQHEIDFKYADAVTACDNIQTFKLVVKTIARKHNLHATFMPKPLFGVNGSGMHFNVSLFKGKENAFFDPNTEMGLTETAYQFTAGVLKNARGFTAVCNPLVNSYKRLVPGYEAPCYIAWSGKNRSPLIRVPSSRGLSTRIEVRSVDPAANPYMALAAILEAGLDGIKNKLKVPEPVNQNIYEMNREEREAVGIQDLPSTLYTALKAMRENEVIKKALGNHIYNQFINSKSIEWDYYRTQVSEWERDQYMKQY</sequence>
<organism>
    <name type="scientific">Staphylococcus aureus (strain MSSA476)</name>
    <dbReference type="NCBI Taxonomy" id="282459"/>
    <lineage>
        <taxon>Bacteria</taxon>
        <taxon>Bacillati</taxon>
        <taxon>Bacillota</taxon>
        <taxon>Bacilli</taxon>
        <taxon>Bacillales</taxon>
        <taxon>Staphylococcaceae</taxon>
        <taxon>Staphylococcus</taxon>
    </lineage>
</organism>
<feature type="chain" id="PRO_0000153261" description="Glutamine synthetase">
    <location>
        <begin position="1"/>
        <end position="446"/>
    </location>
</feature>
<feature type="domain" description="GS beta-grasp" evidence="5">
    <location>
        <begin position="18"/>
        <end position="103"/>
    </location>
</feature>
<feature type="domain" description="GS catalytic" evidence="6">
    <location>
        <begin position="110"/>
        <end position="446"/>
    </location>
</feature>
<feature type="binding site" evidence="2">
    <location>
        <position position="134"/>
    </location>
    <ligand>
        <name>Mg(2+)</name>
        <dbReference type="ChEBI" id="CHEBI:18420"/>
        <label>1</label>
    </ligand>
</feature>
<feature type="binding site" evidence="2">
    <location>
        <position position="136"/>
    </location>
    <ligand>
        <name>Mg(2+)</name>
        <dbReference type="ChEBI" id="CHEBI:18420"/>
        <label>2</label>
    </ligand>
</feature>
<feature type="binding site" evidence="4">
    <location>
        <position position="186"/>
    </location>
    <ligand>
        <name>ATP</name>
        <dbReference type="ChEBI" id="CHEBI:30616"/>
    </ligand>
</feature>
<feature type="binding site" evidence="2">
    <location>
        <position position="191"/>
    </location>
    <ligand>
        <name>Mg(2+)</name>
        <dbReference type="ChEBI" id="CHEBI:18420"/>
        <label>2</label>
    </ligand>
</feature>
<feature type="binding site" evidence="2">
    <location>
        <position position="198"/>
    </location>
    <ligand>
        <name>Mg(2+)</name>
        <dbReference type="ChEBI" id="CHEBI:18420"/>
        <label>2</label>
    </ligand>
</feature>
<feature type="binding site" evidence="4">
    <location>
        <begin position="242"/>
        <end position="243"/>
    </location>
    <ligand>
        <name>L-glutamate</name>
        <dbReference type="ChEBI" id="CHEBI:29985"/>
    </ligand>
</feature>
<feature type="binding site" evidence="2">
    <location>
        <position position="243"/>
    </location>
    <ligand>
        <name>L-glutamate</name>
        <dbReference type="ChEBI" id="CHEBI:29985"/>
    </ligand>
</feature>
<feature type="binding site" evidence="2">
    <location>
        <position position="247"/>
    </location>
    <ligand>
        <name>Mg(2+)</name>
        <dbReference type="ChEBI" id="CHEBI:18420"/>
        <label>1</label>
    </ligand>
</feature>
<feature type="binding site" evidence="3">
    <location>
        <position position="251"/>
    </location>
    <ligand>
        <name>ATP</name>
        <dbReference type="ChEBI" id="CHEBI:30616"/>
    </ligand>
</feature>
<feature type="binding site" evidence="1">
    <location>
        <position position="300"/>
    </location>
    <ligand>
        <name>L-glutamate</name>
        <dbReference type="ChEBI" id="CHEBI:29985"/>
    </ligand>
</feature>
<feature type="binding site" evidence="1">
    <location>
        <position position="306"/>
    </location>
    <ligand>
        <name>L-glutamate</name>
        <dbReference type="ChEBI" id="CHEBI:29985"/>
    </ligand>
</feature>
<feature type="binding site" evidence="4">
    <location>
        <position position="318"/>
    </location>
    <ligand>
        <name>ATP</name>
        <dbReference type="ChEBI" id="CHEBI:30616"/>
    </ligand>
</feature>
<feature type="binding site" evidence="4">
    <location>
        <position position="318"/>
    </location>
    <ligand>
        <name>L-glutamate</name>
        <dbReference type="ChEBI" id="CHEBI:29985"/>
    </ligand>
</feature>
<feature type="binding site" evidence="4">
    <location>
        <position position="323"/>
    </location>
    <ligand>
        <name>ATP</name>
        <dbReference type="ChEBI" id="CHEBI:30616"/>
    </ligand>
</feature>
<feature type="binding site" evidence="2">
    <location>
        <position position="335"/>
    </location>
    <ligand>
        <name>Mg(2+)</name>
        <dbReference type="ChEBI" id="CHEBI:18420"/>
        <label>1</label>
    </ligand>
</feature>
<feature type="binding site" evidence="1">
    <location>
        <position position="337"/>
    </location>
    <ligand>
        <name>L-glutamate</name>
        <dbReference type="ChEBI" id="CHEBI:29985"/>
    </ligand>
</feature>
<feature type="site" description="Important for inhibition by glutamine" evidence="2">
    <location>
        <position position="64"/>
    </location>
</feature>
<accession>Q6G9Q4</accession>
<proteinExistence type="inferred from homology"/>
<evidence type="ECO:0000250" key="1">
    <source>
        <dbReference type="UniProtKB" id="P0A1P6"/>
    </source>
</evidence>
<evidence type="ECO:0000250" key="2">
    <source>
        <dbReference type="UniProtKB" id="P12425"/>
    </source>
</evidence>
<evidence type="ECO:0000250" key="3">
    <source>
        <dbReference type="UniProtKB" id="P77961"/>
    </source>
</evidence>
<evidence type="ECO:0000250" key="4">
    <source>
        <dbReference type="UniProtKB" id="P9WN39"/>
    </source>
</evidence>
<evidence type="ECO:0000255" key="5">
    <source>
        <dbReference type="PROSITE-ProRule" id="PRU01330"/>
    </source>
</evidence>
<evidence type="ECO:0000255" key="6">
    <source>
        <dbReference type="PROSITE-ProRule" id="PRU01331"/>
    </source>
</evidence>
<evidence type="ECO:0000305" key="7"/>
<gene>
    <name evidence="2" type="primary">glnA</name>
    <name type="ordered locus">SAS1242</name>
</gene>
<dbReference type="EC" id="6.3.1.2" evidence="2"/>
<dbReference type="EMBL" id="BX571857">
    <property type="protein sequence ID" value="CAG43020.1"/>
    <property type="molecule type" value="Genomic_DNA"/>
</dbReference>
<dbReference type="RefSeq" id="WP_001126603.1">
    <property type="nucleotide sequence ID" value="NC_002953.3"/>
</dbReference>
<dbReference type="SMR" id="Q6G9Q4"/>
<dbReference type="GeneID" id="98345625"/>
<dbReference type="KEGG" id="sas:SAS1242"/>
<dbReference type="HOGENOM" id="CLU_017290_1_3_9"/>
<dbReference type="GO" id="GO:0005737">
    <property type="term" value="C:cytoplasm"/>
    <property type="evidence" value="ECO:0007669"/>
    <property type="project" value="UniProtKB-SubCell"/>
</dbReference>
<dbReference type="GO" id="GO:0005524">
    <property type="term" value="F:ATP binding"/>
    <property type="evidence" value="ECO:0007669"/>
    <property type="project" value="UniProtKB-KW"/>
</dbReference>
<dbReference type="GO" id="GO:0004356">
    <property type="term" value="F:glutamine synthetase activity"/>
    <property type="evidence" value="ECO:0007669"/>
    <property type="project" value="UniProtKB-EC"/>
</dbReference>
<dbReference type="GO" id="GO:0046872">
    <property type="term" value="F:metal ion binding"/>
    <property type="evidence" value="ECO:0007669"/>
    <property type="project" value="UniProtKB-KW"/>
</dbReference>
<dbReference type="GO" id="GO:0006542">
    <property type="term" value="P:glutamine biosynthetic process"/>
    <property type="evidence" value="ECO:0007669"/>
    <property type="project" value="InterPro"/>
</dbReference>
<dbReference type="FunFam" id="3.10.20.70:FF:000005">
    <property type="entry name" value="Glutamine synthetase"/>
    <property type="match status" value="1"/>
</dbReference>
<dbReference type="FunFam" id="3.30.590.10:FF:000003">
    <property type="entry name" value="Glutamine synthetase 2"/>
    <property type="match status" value="1"/>
</dbReference>
<dbReference type="Gene3D" id="3.10.20.70">
    <property type="entry name" value="Glutamine synthetase, N-terminal domain"/>
    <property type="match status" value="1"/>
</dbReference>
<dbReference type="Gene3D" id="3.30.590.10">
    <property type="entry name" value="Glutamine synthetase/guanido kinase, catalytic domain"/>
    <property type="match status" value="1"/>
</dbReference>
<dbReference type="InterPro" id="IPR008147">
    <property type="entry name" value="Gln_synt_N"/>
</dbReference>
<dbReference type="InterPro" id="IPR036651">
    <property type="entry name" value="Gln_synt_N_sf"/>
</dbReference>
<dbReference type="InterPro" id="IPR014746">
    <property type="entry name" value="Gln_synth/guanido_kin_cat_dom"/>
</dbReference>
<dbReference type="InterPro" id="IPR008146">
    <property type="entry name" value="Gln_synth_cat_dom"/>
</dbReference>
<dbReference type="InterPro" id="IPR027303">
    <property type="entry name" value="Gln_synth_gly_rich_site"/>
</dbReference>
<dbReference type="InterPro" id="IPR004809">
    <property type="entry name" value="Gln_synth_I"/>
</dbReference>
<dbReference type="InterPro" id="IPR027302">
    <property type="entry name" value="Gln_synth_N_conserv_site"/>
</dbReference>
<dbReference type="NCBIfam" id="TIGR00653">
    <property type="entry name" value="GlnA"/>
    <property type="match status" value="1"/>
</dbReference>
<dbReference type="PANTHER" id="PTHR43785">
    <property type="entry name" value="GAMMA-GLUTAMYLPUTRESCINE SYNTHETASE"/>
    <property type="match status" value="1"/>
</dbReference>
<dbReference type="PANTHER" id="PTHR43785:SF12">
    <property type="entry name" value="TYPE-1 GLUTAMINE SYNTHETASE 2"/>
    <property type="match status" value="1"/>
</dbReference>
<dbReference type="Pfam" id="PF00120">
    <property type="entry name" value="Gln-synt_C"/>
    <property type="match status" value="1"/>
</dbReference>
<dbReference type="Pfam" id="PF03951">
    <property type="entry name" value="Gln-synt_N"/>
    <property type="match status" value="1"/>
</dbReference>
<dbReference type="SMART" id="SM01230">
    <property type="entry name" value="Gln-synt_C"/>
    <property type="match status" value="1"/>
</dbReference>
<dbReference type="SUPFAM" id="SSF54368">
    <property type="entry name" value="Glutamine synthetase, N-terminal domain"/>
    <property type="match status" value="1"/>
</dbReference>
<dbReference type="SUPFAM" id="SSF55931">
    <property type="entry name" value="Glutamine synthetase/guanido kinase"/>
    <property type="match status" value="1"/>
</dbReference>
<dbReference type="PROSITE" id="PS00180">
    <property type="entry name" value="GLNA_1"/>
    <property type="match status" value="1"/>
</dbReference>
<dbReference type="PROSITE" id="PS00181">
    <property type="entry name" value="GLNA_ATP"/>
    <property type="match status" value="1"/>
</dbReference>
<dbReference type="PROSITE" id="PS51986">
    <property type="entry name" value="GS_BETA_GRASP"/>
    <property type="match status" value="1"/>
</dbReference>
<dbReference type="PROSITE" id="PS51987">
    <property type="entry name" value="GS_CATALYTIC"/>
    <property type="match status" value="1"/>
</dbReference>
<comment type="function">
    <text evidence="2">Glutamine synthetase (GS) is an unusual multitasking protein that functions as an enzyme, a transcription coregulator, and a chaperone in ammonium assimilation and in the regulation of genes involved in nitrogen metabolism. It catalyzes the ATP-dependent biosynthesis of glutamine from glutamate and ammonia. Feedback-inhibited GlnA also interacts with and regulates the activity of the transcriptional regulator TnrA. During nitrogen limitation, TnrA is in its DNA-binding active state and turns on the transcription of genes required for nitrogen assimilation. Under conditions of nitrogen excess, feedback-inhibited GlnA forms a stable complex with TnrA, which inhibits its DNA-binding activity. In contrast, feedback-inhibited GlnA acts as a chaperone to stabilize the DNA-binding activity of GlnR, which represses the transcription of nitrogen assimilation genes.</text>
</comment>
<comment type="catalytic activity">
    <reaction evidence="2">
        <text>L-glutamate + NH4(+) + ATP = L-glutamine + ADP + phosphate + H(+)</text>
        <dbReference type="Rhea" id="RHEA:16169"/>
        <dbReference type="ChEBI" id="CHEBI:15378"/>
        <dbReference type="ChEBI" id="CHEBI:28938"/>
        <dbReference type="ChEBI" id="CHEBI:29985"/>
        <dbReference type="ChEBI" id="CHEBI:30616"/>
        <dbReference type="ChEBI" id="CHEBI:43474"/>
        <dbReference type="ChEBI" id="CHEBI:58359"/>
        <dbReference type="ChEBI" id="CHEBI:456216"/>
        <dbReference type="EC" id="6.3.1.2"/>
    </reaction>
</comment>
<comment type="cofactor">
    <cofactor evidence="2">
        <name>Mg(2+)</name>
        <dbReference type="ChEBI" id="CHEBI:18420"/>
    </cofactor>
    <text evidence="2">Binds 2 Mg(2+) ions per subunit.</text>
</comment>
<comment type="activity regulation">
    <text evidence="2">Inhibited by glutamine.</text>
</comment>
<comment type="subunit">
    <text evidence="2">Oligomer of 12 subunits arranged in the form of two hexagons. In its feedback-inhibited form, interacts with TnrA in order to block its DNA-binding activity.</text>
</comment>
<comment type="subcellular location">
    <subcellularLocation>
        <location evidence="2">Cytoplasm</location>
    </subcellularLocation>
</comment>
<comment type="similarity">
    <text evidence="7">Belongs to the glutamine synthetase family.</text>
</comment>
<protein>
    <recommendedName>
        <fullName evidence="2">Glutamine synthetase</fullName>
        <shortName evidence="2">GS</shortName>
        <ecNumber evidence="2">6.3.1.2</ecNumber>
    </recommendedName>
    <alternativeName>
        <fullName evidence="2">Glutamate--ammonia ligase</fullName>
    </alternativeName>
    <alternativeName>
        <fullName evidence="2">Glutamine synthetase I alpha</fullName>
        <shortName evidence="2">GSI alpha</shortName>
    </alternativeName>
</protein>
<reference key="1">
    <citation type="journal article" date="2004" name="Proc. Natl. Acad. Sci. U.S.A.">
        <title>Complete genomes of two clinical Staphylococcus aureus strains: evidence for the rapid evolution of virulence and drug resistance.</title>
        <authorList>
            <person name="Holden M.T.G."/>
            <person name="Feil E.J."/>
            <person name="Lindsay J.A."/>
            <person name="Peacock S.J."/>
            <person name="Day N.P.J."/>
            <person name="Enright M.C."/>
            <person name="Foster T.J."/>
            <person name="Moore C.E."/>
            <person name="Hurst L."/>
            <person name="Atkin R."/>
            <person name="Barron A."/>
            <person name="Bason N."/>
            <person name="Bentley S.D."/>
            <person name="Chillingworth C."/>
            <person name="Chillingworth T."/>
            <person name="Churcher C."/>
            <person name="Clark L."/>
            <person name="Corton C."/>
            <person name="Cronin A."/>
            <person name="Doggett J."/>
            <person name="Dowd L."/>
            <person name="Feltwell T."/>
            <person name="Hance Z."/>
            <person name="Harris B."/>
            <person name="Hauser H."/>
            <person name="Holroyd S."/>
            <person name="Jagels K."/>
            <person name="James K.D."/>
            <person name="Lennard N."/>
            <person name="Line A."/>
            <person name="Mayes R."/>
            <person name="Moule S."/>
            <person name="Mungall K."/>
            <person name="Ormond D."/>
            <person name="Quail M.A."/>
            <person name="Rabbinowitsch E."/>
            <person name="Rutherford K.M."/>
            <person name="Sanders M."/>
            <person name="Sharp S."/>
            <person name="Simmonds M."/>
            <person name="Stevens K."/>
            <person name="Whitehead S."/>
            <person name="Barrell B.G."/>
            <person name="Spratt B.G."/>
            <person name="Parkhill J."/>
        </authorList>
    </citation>
    <scope>NUCLEOTIDE SEQUENCE [LARGE SCALE GENOMIC DNA]</scope>
    <source>
        <strain>MSSA476</strain>
    </source>
</reference>
<name>GLN1A_STAAS</name>
<keyword id="KW-0067">ATP-binding</keyword>
<keyword id="KW-0963">Cytoplasm</keyword>
<keyword id="KW-0436">Ligase</keyword>
<keyword id="KW-0460">Magnesium</keyword>
<keyword id="KW-0479">Metal-binding</keyword>
<keyword id="KW-0547">Nucleotide-binding</keyword>